<reference key="1">
    <citation type="journal article" date="2003" name="Mol. Microbiol.">
        <title>An integrated analysis of the genome of the hyperthermophilic archaeon Pyrococcus abyssi.</title>
        <authorList>
            <person name="Cohen G.N."/>
            <person name="Barbe V."/>
            <person name="Flament D."/>
            <person name="Galperin M."/>
            <person name="Heilig R."/>
            <person name="Lecompte O."/>
            <person name="Poch O."/>
            <person name="Prieur D."/>
            <person name="Querellou J."/>
            <person name="Ripp R."/>
            <person name="Thierry J.-C."/>
            <person name="Van der Oost J."/>
            <person name="Weissenbach J."/>
            <person name="Zivanovic Y."/>
            <person name="Forterre P."/>
        </authorList>
    </citation>
    <scope>NUCLEOTIDE SEQUENCE [LARGE SCALE GENOMIC DNA]</scope>
    <source>
        <strain>GE5 / Orsay</strain>
    </source>
</reference>
<reference key="2">
    <citation type="journal article" date="2012" name="Curr. Microbiol.">
        <title>Re-annotation of two hyperthermophilic archaea Pyrococcus abyssi GE5 and Pyrococcus furiosus DSM 3638.</title>
        <authorList>
            <person name="Gao J."/>
            <person name="Wang J."/>
        </authorList>
    </citation>
    <scope>GENOME REANNOTATION</scope>
    <source>
        <strain>GE5 / Orsay</strain>
    </source>
</reference>
<comment type="function">
    <text evidence="1">Involved in chemotaxis. Part of a chemotaxis signal transduction system that modulates chemotaxis in response to various stimuli. Catalyzes the demethylation of specific methylglutamate residues introduced into the chemoreceptors (methyl-accepting chemotaxis proteins or MCP) by CheR. Also mediates the irreversible deamidation of specific glutamine residues to glutamic acid.</text>
</comment>
<comment type="catalytic activity">
    <reaction evidence="1">
        <text>[protein]-L-glutamate 5-O-methyl ester + H2O = L-glutamyl-[protein] + methanol + H(+)</text>
        <dbReference type="Rhea" id="RHEA:23236"/>
        <dbReference type="Rhea" id="RHEA-COMP:10208"/>
        <dbReference type="Rhea" id="RHEA-COMP:10311"/>
        <dbReference type="ChEBI" id="CHEBI:15377"/>
        <dbReference type="ChEBI" id="CHEBI:15378"/>
        <dbReference type="ChEBI" id="CHEBI:17790"/>
        <dbReference type="ChEBI" id="CHEBI:29973"/>
        <dbReference type="ChEBI" id="CHEBI:82795"/>
        <dbReference type="EC" id="3.1.1.61"/>
    </reaction>
</comment>
<comment type="catalytic activity">
    <reaction evidence="1">
        <text>L-glutaminyl-[protein] + H2O = L-glutamyl-[protein] + NH4(+)</text>
        <dbReference type="Rhea" id="RHEA:16441"/>
        <dbReference type="Rhea" id="RHEA-COMP:10207"/>
        <dbReference type="Rhea" id="RHEA-COMP:10208"/>
        <dbReference type="ChEBI" id="CHEBI:15377"/>
        <dbReference type="ChEBI" id="CHEBI:28938"/>
        <dbReference type="ChEBI" id="CHEBI:29973"/>
        <dbReference type="ChEBI" id="CHEBI:30011"/>
        <dbReference type="EC" id="3.5.1.44"/>
    </reaction>
</comment>
<comment type="subcellular location">
    <subcellularLocation>
        <location evidence="1">Cytoplasm</location>
    </subcellularLocation>
</comment>
<comment type="domain">
    <text evidence="1">Contains a C-terminal catalytic domain, and an N-terminal region which modulates catalytic activity.</text>
</comment>
<comment type="PTM">
    <text evidence="1">Phosphorylated by CheA. Phosphorylation of the N-terminal regulatory domain activates the methylesterase activity.</text>
</comment>
<comment type="similarity">
    <text evidence="1">Belongs to the CheB family.</text>
</comment>
<sequence>MPLTGRKIRVLVVDDSAFMRKVLKDIINSDPELEVCGEARDGIEAIEMVQKCRPDVVTLDVEMPRMNGLDALRVIMKKYPVPVIMISALTQEGAEATIKALEYGAIDFIPKPSSSISINMRELKDEIIAKIKEAAKVPRRFLELRRIRLLRVQKAKKVKPSVPARIAVAIAASTGGPQSLLKIFPKFPENLKAGILLVQHMPPGFTRSFAKRLDSVSKIDVKEAEEGDVVEEGKAYVAPGDYHMEVTLRGGKPVITLNKKPKMHGVRPAADPMMITAAQVFGRRTVGVVMTGMGRDGAQGIVEIKKRGGITIAQDEKTSIIFGMPKAAIETGMVDYVVPLEKIPETVVRAVEMIRGGGNLGRHVTIPR</sequence>
<organism>
    <name type="scientific">Pyrococcus abyssi (strain GE5 / Orsay)</name>
    <dbReference type="NCBI Taxonomy" id="272844"/>
    <lineage>
        <taxon>Archaea</taxon>
        <taxon>Methanobacteriati</taxon>
        <taxon>Methanobacteriota</taxon>
        <taxon>Thermococci</taxon>
        <taxon>Thermococcales</taxon>
        <taxon>Thermococcaceae</taxon>
        <taxon>Pyrococcus</taxon>
    </lineage>
</organism>
<dbReference type="EC" id="3.1.1.61" evidence="1"/>
<dbReference type="EC" id="3.5.1.44" evidence="1"/>
<dbReference type="EMBL" id="AJ248288">
    <property type="protein sequence ID" value="CAB50459.1"/>
    <property type="molecule type" value="Genomic_DNA"/>
</dbReference>
<dbReference type="EMBL" id="HE613800">
    <property type="protein sequence ID" value="CCE71009.1"/>
    <property type="molecule type" value="Genomic_DNA"/>
</dbReference>
<dbReference type="PIR" id="E75002">
    <property type="entry name" value="E75002"/>
</dbReference>
<dbReference type="RefSeq" id="WP_010868672.1">
    <property type="nucleotide sequence ID" value="NC_000868.1"/>
</dbReference>
<dbReference type="SMR" id="Q9UYF3"/>
<dbReference type="STRING" id="272844.PAB1331"/>
<dbReference type="KEGG" id="pab:PAB1331"/>
<dbReference type="PATRIC" id="fig|272844.11.peg.1654"/>
<dbReference type="eggNOG" id="arCOG02382">
    <property type="taxonomic scope" value="Archaea"/>
</dbReference>
<dbReference type="HOGENOM" id="CLU_000445_51_0_2"/>
<dbReference type="OrthoDB" id="2857at2157"/>
<dbReference type="PhylomeDB" id="Q9UYF3"/>
<dbReference type="Proteomes" id="UP000000810">
    <property type="component" value="Chromosome"/>
</dbReference>
<dbReference type="Proteomes" id="UP000009139">
    <property type="component" value="Chromosome"/>
</dbReference>
<dbReference type="GO" id="GO:0005737">
    <property type="term" value="C:cytoplasm"/>
    <property type="evidence" value="ECO:0007669"/>
    <property type="project" value="UniProtKB-SubCell"/>
</dbReference>
<dbReference type="GO" id="GO:0000156">
    <property type="term" value="F:phosphorelay response regulator activity"/>
    <property type="evidence" value="ECO:0007669"/>
    <property type="project" value="InterPro"/>
</dbReference>
<dbReference type="GO" id="GO:0008984">
    <property type="term" value="F:protein-glutamate methylesterase activity"/>
    <property type="evidence" value="ECO:0007669"/>
    <property type="project" value="UniProtKB-UniRule"/>
</dbReference>
<dbReference type="GO" id="GO:0050568">
    <property type="term" value="F:protein-glutamine glutaminase activity"/>
    <property type="evidence" value="ECO:0007669"/>
    <property type="project" value="UniProtKB-UniRule"/>
</dbReference>
<dbReference type="GO" id="GO:0006935">
    <property type="term" value="P:chemotaxis"/>
    <property type="evidence" value="ECO:0007669"/>
    <property type="project" value="UniProtKB-UniRule"/>
</dbReference>
<dbReference type="CDD" id="cd16432">
    <property type="entry name" value="CheB_Rec"/>
    <property type="match status" value="1"/>
</dbReference>
<dbReference type="CDD" id="cd17541">
    <property type="entry name" value="REC_CheB-like"/>
    <property type="match status" value="1"/>
</dbReference>
<dbReference type="Gene3D" id="3.40.50.2300">
    <property type="match status" value="1"/>
</dbReference>
<dbReference type="Gene3D" id="3.40.50.180">
    <property type="entry name" value="Methylesterase CheB, C-terminal domain"/>
    <property type="match status" value="1"/>
</dbReference>
<dbReference type="HAMAP" id="MF_00099">
    <property type="entry name" value="CheB_chemtxs"/>
    <property type="match status" value="1"/>
</dbReference>
<dbReference type="InterPro" id="IPR008248">
    <property type="entry name" value="CheB-like"/>
</dbReference>
<dbReference type="InterPro" id="IPR035909">
    <property type="entry name" value="CheB_C"/>
</dbReference>
<dbReference type="InterPro" id="IPR011006">
    <property type="entry name" value="CheY-like_superfamily"/>
</dbReference>
<dbReference type="InterPro" id="IPR000673">
    <property type="entry name" value="Sig_transdc_resp-reg_Me-estase"/>
</dbReference>
<dbReference type="InterPro" id="IPR001789">
    <property type="entry name" value="Sig_transdc_resp-reg_receiver"/>
</dbReference>
<dbReference type="NCBIfam" id="NF001965">
    <property type="entry name" value="PRK00742.1"/>
    <property type="match status" value="1"/>
</dbReference>
<dbReference type="NCBIfam" id="NF009206">
    <property type="entry name" value="PRK12555.1"/>
    <property type="match status" value="1"/>
</dbReference>
<dbReference type="PANTHER" id="PTHR42872">
    <property type="entry name" value="PROTEIN-GLUTAMATE METHYLESTERASE/PROTEIN-GLUTAMINE GLUTAMINASE"/>
    <property type="match status" value="1"/>
</dbReference>
<dbReference type="PANTHER" id="PTHR42872:SF6">
    <property type="entry name" value="PROTEIN-GLUTAMATE METHYLESTERASE_PROTEIN-GLUTAMINE GLUTAMINASE"/>
    <property type="match status" value="1"/>
</dbReference>
<dbReference type="Pfam" id="PF01339">
    <property type="entry name" value="CheB_methylest"/>
    <property type="match status" value="1"/>
</dbReference>
<dbReference type="Pfam" id="PF00072">
    <property type="entry name" value="Response_reg"/>
    <property type="match status" value="1"/>
</dbReference>
<dbReference type="PIRSF" id="PIRSF000876">
    <property type="entry name" value="RR_chemtxs_CheB"/>
    <property type="match status" value="1"/>
</dbReference>
<dbReference type="SMART" id="SM00448">
    <property type="entry name" value="REC"/>
    <property type="match status" value="1"/>
</dbReference>
<dbReference type="SUPFAM" id="SSF52172">
    <property type="entry name" value="CheY-like"/>
    <property type="match status" value="1"/>
</dbReference>
<dbReference type="SUPFAM" id="SSF52738">
    <property type="entry name" value="Methylesterase CheB, C-terminal domain"/>
    <property type="match status" value="1"/>
</dbReference>
<dbReference type="PROSITE" id="PS50122">
    <property type="entry name" value="CHEB"/>
    <property type="match status" value="1"/>
</dbReference>
<dbReference type="PROSITE" id="PS50110">
    <property type="entry name" value="RESPONSE_REGULATORY"/>
    <property type="match status" value="1"/>
</dbReference>
<accession>Q9UYF3</accession>
<accession>G8ZIX6</accession>
<proteinExistence type="inferred from homology"/>
<protein>
    <recommendedName>
        <fullName evidence="1">Protein-glutamate methylesterase/protein-glutamine glutaminase</fullName>
        <ecNumber evidence="1">3.1.1.61</ecNumber>
        <ecNumber evidence="1">3.5.1.44</ecNumber>
    </recommendedName>
</protein>
<keyword id="KW-0145">Chemotaxis</keyword>
<keyword id="KW-0963">Cytoplasm</keyword>
<keyword id="KW-0378">Hydrolase</keyword>
<keyword id="KW-0597">Phosphoprotein</keyword>
<evidence type="ECO:0000255" key="1">
    <source>
        <dbReference type="HAMAP-Rule" id="MF_00099"/>
    </source>
</evidence>
<feature type="chain" id="PRO_0000158056" description="Protein-glutamate methylesterase/protein-glutamine glutaminase">
    <location>
        <begin position="1"/>
        <end position="368"/>
    </location>
</feature>
<feature type="domain" description="Response regulatory" evidence="1">
    <location>
        <begin position="9"/>
        <end position="126"/>
    </location>
</feature>
<feature type="domain" description="CheB-type methylesterase" evidence="1">
    <location>
        <begin position="161"/>
        <end position="354"/>
    </location>
</feature>
<feature type="active site" evidence="1">
    <location>
        <position position="173"/>
    </location>
</feature>
<feature type="active site" evidence="1">
    <location>
        <position position="200"/>
    </location>
</feature>
<feature type="active site" evidence="1">
    <location>
        <position position="296"/>
    </location>
</feature>
<feature type="modified residue" description="4-aspartylphosphate" evidence="1">
    <location>
        <position position="60"/>
    </location>
</feature>
<name>CHEB_PYRAB</name>
<gene>
    <name evidence="1" type="primary">cheB</name>
    <name type="ordered locus">PYRAB15550</name>
    <name type="ORF">PAB1331</name>
</gene>